<gene>
    <name type="ordered locus">SAS0791</name>
</gene>
<feature type="chain" id="PRO_0000360895" description="Probable nitronate monooxygenase">
    <location>
        <begin position="1"/>
        <end position="355"/>
    </location>
</feature>
<feature type="binding site" evidence="2">
    <location>
        <position position="71"/>
    </location>
    <ligand>
        <name>FMN</name>
        <dbReference type="ChEBI" id="CHEBI:58210"/>
    </ligand>
</feature>
<feature type="binding site" evidence="2">
    <location>
        <position position="175"/>
    </location>
    <ligand>
        <name>FMN</name>
        <dbReference type="ChEBI" id="CHEBI:58210"/>
    </ligand>
</feature>
<feature type="binding site" evidence="2">
    <location>
        <position position="180"/>
    </location>
    <ligand>
        <name>FMN</name>
        <dbReference type="ChEBI" id="CHEBI:58210"/>
    </ligand>
</feature>
<feature type="binding site" evidence="2">
    <location>
        <position position="218"/>
    </location>
    <ligand>
        <name>FMN</name>
        <dbReference type="ChEBI" id="CHEBI:58210"/>
    </ligand>
</feature>
<feature type="binding site" evidence="2">
    <location>
        <begin position="237"/>
        <end position="240"/>
    </location>
    <ligand>
        <name>FMN</name>
        <dbReference type="ChEBI" id="CHEBI:58210"/>
    </ligand>
</feature>
<sequence>MWNKNRLTQMLSIEYPIIQAGMAGSTTPKLVASVSNSGGLGTIGAGYFNTQQLEDEIDYVRQLTSNSFGVNVFVPSQQSYTSSQIENMNAWLKPYRRALHLEEPVVKITEEQQFKCHIDTIIKKQVPVCCFTFGIPSESIIKRLKEANIKLIGTATSVDEAIANEKAGMDAIVAQGSEAGGHRGSFLKPKNQLPMVGTISLVPQIVDVVSIPVIAAGGIMDGRGVLASIVLGAEGVQMGTAFLTSQDSNASELLRDAIINSKETDTVVTKAFSGKLARGINNRFIEEMSQYEGDIPDYPIQNELTSSIRKAAANIGDKELTHMWSGQSPRLATTHPANTIVSNIINQINQIMQYK</sequence>
<protein>
    <recommendedName>
        <fullName>Probable nitronate monooxygenase</fullName>
        <shortName>NMO</shortName>
        <ecNumber evidence="2">1.13.12.-</ecNumber>
    </recommendedName>
    <alternativeName>
        <fullName>Propionate 3-nitronate monooxygenase</fullName>
        <shortName>P3N monooxygenase</shortName>
    </alternativeName>
</protein>
<accession>Q6GB05</accession>
<keyword id="KW-0216">Detoxification</keyword>
<keyword id="KW-0285">Flavoprotein</keyword>
<keyword id="KW-0288">FMN</keyword>
<keyword id="KW-0503">Monooxygenase</keyword>
<keyword id="KW-0547">Nucleotide-binding</keyword>
<keyword id="KW-0560">Oxidoreductase</keyword>
<proteinExistence type="inferred from homology"/>
<reference key="1">
    <citation type="journal article" date="2004" name="Proc. Natl. Acad. Sci. U.S.A.">
        <title>Complete genomes of two clinical Staphylococcus aureus strains: evidence for the rapid evolution of virulence and drug resistance.</title>
        <authorList>
            <person name="Holden M.T.G."/>
            <person name="Feil E.J."/>
            <person name="Lindsay J.A."/>
            <person name="Peacock S.J."/>
            <person name="Day N.P.J."/>
            <person name="Enright M.C."/>
            <person name="Foster T.J."/>
            <person name="Moore C.E."/>
            <person name="Hurst L."/>
            <person name="Atkin R."/>
            <person name="Barron A."/>
            <person name="Bason N."/>
            <person name="Bentley S.D."/>
            <person name="Chillingworth C."/>
            <person name="Chillingworth T."/>
            <person name="Churcher C."/>
            <person name="Clark L."/>
            <person name="Corton C."/>
            <person name="Cronin A."/>
            <person name="Doggett J."/>
            <person name="Dowd L."/>
            <person name="Feltwell T."/>
            <person name="Hance Z."/>
            <person name="Harris B."/>
            <person name="Hauser H."/>
            <person name="Holroyd S."/>
            <person name="Jagels K."/>
            <person name="James K.D."/>
            <person name="Lennard N."/>
            <person name="Line A."/>
            <person name="Mayes R."/>
            <person name="Moule S."/>
            <person name="Mungall K."/>
            <person name="Ormond D."/>
            <person name="Quail M.A."/>
            <person name="Rabbinowitsch E."/>
            <person name="Rutherford K.M."/>
            <person name="Sanders M."/>
            <person name="Sharp S."/>
            <person name="Simmonds M."/>
            <person name="Stevens K."/>
            <person name="Whitehead S."/>
            <person name="Barrell B.G."/>
            <person name="Spratt B.G."/>
            <person name="Parkhill J."/>
        </authorList>
    </citation>
    <scope>NUCLEOTIDE SEQUENCE [LARGE SCALE GENOMIC DNA]</scope>
    <source>
        <strain>MSSA476</strain>
    </source>
</reference>
<dbReference type="EC" id="1.13.12.-" evidence="2"/>
<dbReference type="EMBL" id="BX571857">
    <property type="protein sequence ID" value="CAG42566.1"/>
    <property type="molecule type" value="Genomic_DNA"/>
</dbReference>
<dbReference type="RefSeq" id="WP_000267251.1">
    <property type="nucleotide sequence ID" value="NC_002953.3"/>
</dbReference>
<dbReference type="SMR" id="Q6GB05"/>
<dbReference type="KEGG" id="sas:SAS0791"/>
<dbReference type="HOGENOM" id="CLU_038732_5_1_9"/>
<dbReference type="GO" id="GO:0018580">
    <property type="term" value="F:nitronate monooxygenase activity"/>
    <property type="evidence" value="ECO:0007669"/>
    <property type="project" value="InterPro"/>
</dbReference>
<dbReference type="GO" id="GO:0000166">
    <property type="term" value="F:nucleotide binding"/>
    <property type="evidence" value="ECO:0007669"/>
    <property type="project" value="UniProtKB-KW"/>
</dbReference>
<dbReference type="GO" id="GO:0009636">
    <property type="term" value="P:response to toxic substance"/>
    <property type="evidence" value="ECO:0007669"/>
    <property type="project" value="UniProtKB-KW"/>
</dbReference>
<dbReference type="CDD" id="cd04730">
    <property type="entry name" value="NPD_like"/>
    <property type="match status" value="1"/>
</dbReference>
<dbReference type="FunFam" id="3.20.20.70:FF:000154">
    <property type="entry name" value="Probable nitronate monooxygenase"/>
    <property type="match status" value="1"/>
</dbReference>
<dbReference type="Gene3D" id="3.20.20.70">
    <property type="entry name" value="Aldolase class I"/>
    <property type="match status" value="1"/>
</dbReference>
<dbReference type="InterPro" id="IPR013785">
    <property type="entry name" value="Aldolase_TIM"/>
</dbReference>
<dbReference type="InterPro" id="IPR004136">
    <property type="entry name" value="NMO"/>
</dbReference>
<dbReference type="PANTHER" id="PTHR42747">
    <property type="entry name" value="NITRONATE MONOOXYGENASE-RELATED"/>
    <property type="match status" value="1"/>
</dbReference>
<dbReference type="PANTHER" id="PTHR42747:SF3">
    <property type="entry name" value="NITRONATE MONOOXYGENASE-RELATED"/>
    <property type="match status" value="1"/>
</dbReference>
<dbReference type="Pfam" id="PF03060">
    <property type="entry name" value="NMO"/>
    <property type="match status" value="1"/>
</dbReference>
<dbReference type="SUPFAM" id="SSF51412">
    <property type="entry name" value="Inosine monophosphate dehydrogenase (IMPDH)"/>
    <property type="match status" value="1"/>
</dbReference>
<name>NMO_STAAS</name>
<evidence type="ECO:0000250" key="1">
    <source>
        <dbReference type="UniProtKB" id="D0V3Y4"/>
    </source>
</evidence>
<evidence type="ECO:0000250" key="2">
    <source>
        <dbReference type="UniProtKB" id="Q9HWH9"/>
    </source>
</evidence>
<evidence type="ECO:0000305" key="3"/>
<organism>
    <name type="scientific">Staphylococcus aureus (strain MSSA476)</name>
    <dbReference type="NCBI Taxonomy" id="282459"/>
    <lineage>
        <taxon>Bacteria</taxon>
        <taxon>Bacillati</taxon>
        <taxon>Bacillota</taxon>
        <taxon>Bacilli</taxon>
        <taxon>Bacillales</taxon>
        <taxon>Staphylococcaceae</taxon>
        <taxon>Staphylococcus</taxon>
    </lineage>
</organism>
<comment type="function">
    <text evidence="2">Nitronate monooxygenase that uses molecular oxygen to catalyze the oxidative denitrification of alkyl nitronates. Acts on propionate 3-nitronate (P3N), the presumed physiological substrate. Probably functions in the detoxification of P3N, a metabolic poison produced by plants and fungi as a defense mechanism.</text>
</comment>
<comment type="catalytic activity">
    <reaction evidence="1">
        <text>3 propionate 3-nitronate + 3 O2 + H2O = 3 3-oxopropanoate + 2 nitrate + nitrite + H2O2 + 3 H(+)</text>
        <dbReference type="Rhea" id="RHEA:57332"/>
        <dbReference type="ChEBI" id="CHEBI:15377"/>
        <dbReference type="ChEBI" id="CHEBI:15378"/>
        <dbReference type="ChEBI" id="CHEBI:15379"/>
        <dbReference type="ChEBI" id="CHEBI:16240"/>
        <dbReference type="ChEBI" id="CHEBI:16301"/>
        <dbReference type="ChEBI" id="CHEBI:17632"/>
        <dbReference type="ChEBI" id="CHEBI:33190"/>
        <dbReference type="ChEBI" id="CHEBI:136067"/>
    </reaction>
</comment>
<comment type="cofactor">
    <cofactor evidence="2">
        <name>FMN</name>
        <dbReference type="ChEBI" id="CHEBI:58210"/>
    </cofactor>
    <text evidence="2">Binds 1 FMN per subunit.</text>
</comment>
<comment type="miscellaneous">
    <text evidence="3">P3N is a potent irreversible inhibitor of the key enzyme succinate dehydrogenase in the Krebs cycle and electron transport chain. P3N has been shown to be a toxic metabolite to bacteria, plants, fungi, mammals or any organism that uses succinate dehydrogenase.</text>
</comment>
<comment type="similarity">
    <text evidence="3">Belongs to the nitronate monooxygenase family. NMO class I subfamily.</text>
</comment>